<comment type="function">
    <text evidence="2">Acts as a cofactor for XPO1/CRM1-mediated nuclear export, perhaps as export complex scaffolding protein. Bound to XPO1/CRM1, stabilizes the XPO1/CRM1-cargo interaction. In the absence of Ran-bound GTP prevents binding of XPO1/CRM1 to the nuclear pore complex. Binds to CHC1/RCC1 and increases the guanine nucleotide exchange activity of CHC1/RCC1. Recruits XPO1/CRM1 to CHC1/RCC1 in a Ran-dependent manner. Negative regulator of TGF-beta signaling through interaction with the R-SMAD proteins, SMAD2 and SMAD3, and mediating their nuclear export.</text>
</comment>
<comment type="subunit">
    <text evidence="2">Interacts with CHC1 in a Ran-stimulated manner. Interacts with XPO1. Interacts (via its C-terminal R domain) with SMAD2 (dephosphorylated form via its MH1 and MH2 domains); the interaction results in the nuclear export of SMAD2 and termination of the TGF-beta signaling. Interacts (via its C-terminal R domain) with SMAD3 (dephosphorylated form via its MH1 domain); the interaction results in the nuclear export of SMAD3 and termination of the TGF-beta signaling.</text>
</comment>
<comment type="subcellular location">
    <subcellularLocation>
        <location evidence="2">Cytoplasm</location>
    </subcellularLocation>
    <subcellularLocation>
        <location evidence="2">Nucleus</location>
    </subcellularLocation>
    <text evidence="2">Nuclear import is promoted by phosphorylation at Ser-58 and is dependent on KPNA4.</text>
</comment>
<comment type="PTM">
    <text evidence="2">Phosphorylation at Ser-58 promotes its import into the nucleus.</text>
</comment>
<keyword id="KW-0007">Acetylation</keyword>
<keyword id="KW-0963">Cytoplasm</keyword>
<keyword id="KW-0539">Nucleus</keyword>
<keyword id="KW-0597">Phosphoprotein</keyword>
<keyword id="KW-0653">Protein transport</keyword>
<keyword id="KW-1185">Reference proteome</keyword>
<keyword id="KW-0813">Transport</keyword>
<protein>
    <recommendedName>
        <fullName>Ran-binding protein 3</fullName>
        <shortName>RanBP3</shortName>
    </recommendedName>
</protein>
<organism>
    <name type="scientific">Pongo abelii</name>
    <name type="common">Sumatran orangutan</name>
    <name type="synonym">Pongo pygmaeus abelii</name>
    <dbReference type="NCBI Taxonomy" id="9601"/>
    <lineage>
        <taxon>Eukaryota</taxon>
        <taxon>Metazoa</taxon>
        <taxon>Chordata</taxon>
        <taxon>Craniata</taxon>
        <taxon>Vertebrata</taxon>
        <taxon>Euteleostomi</taxon>
        <taxon>Mammalia</taxon>
        <taxon>Eutheria</taxon>
        <taxon>Euarchontoglires</taxon>
        <taxon>Primates</taxon>
        <taxon>Haplorrhini</taxon>
        <taxon>Catarrhini</taxon>
        <taxon>Hominidae</taxon>
        <taxon>Pongo</taxon>
    </lineage>
</organism>
<evidence type="ECO:0000250" key="1">
    <source>
        <dbReference type="UniProtKB" id="Q9CT10"/>
    </source>
</evidence>
<evidence type="ECO:0000250" key="2">
    <source>
        <dbReference type="UniProtKB" id="Q9H6Z4"/>
    </source>
</evidence>
<evidence type="ECO:0000255" key="3">
    <source>
        <dbReference type="PROSITE-ProRule" id="PRU00164"/>
    </source>
</evidence>
<evidence type="ECO:0000256" key="4">
    <source>
        <dbReference type="SAM" id="MobiDB-lite"/>
    </source>
</evidence>
<feature type="initiator methionine" description="Removed" evidence="2">
    <location>
        <position position="1"/>
    </location>
</feature>
<feature type="chain" id="PRO_0000097168" description="Ran-binding protein 3">
    <location>
        <begin position="2"/>
        <end position="494"/>
    </location>
</feature>
<feature type="domain" description="RanBD1" evidence="3">
    <location>
        <begin position="305"/>
        <end position="445"/>
    </location>
</feature>
<feature type="region of interest" description="Disordered" evidence="4">
    <location>
        <begin position="1"/>
        <end position="192"/>
    </location>
</feature>
<feature type="region of interest" description="Disordered" evidence="4">
    <location>
        <begin position="259"/>
        <end position="300"/>
    </location>
</feature>
<feature type="region of interest" description="Disordered" evidence="4">
    <location>
        <begin position="442"/>
        <end position="494"/>
    </location>
</feature>
<feature type="short sequence motif" description="Nuclear localization signal" evidence="2">
    <location>
        <begin position="49"/>
        <end position="57"/>
    </location>
</feature>
<feature type="compositionally biased region" description="Basic and acidic residues" evidence="4">
    <location>
        <begin position="1"/>
        <end position="10"/>
    </location>
</feature>
<feature type="compositionally biased region" description="Basic and acidic residues" evidence="4">
    <location>
        <begin position="43"/>
        <end position="56"/>
    </location>
</feature>
<feature type="compositionally biased region" description="Polar residues" evidence="4">
    <location>
        <begin position="57"/>
        <end position="66"/>
    </location>
</feature>
<feature type="compositionally biased region" description="Polar residues" evidence="4">
    <location>
        <begin position="116"/>
        <end position="129"/>
    </location>
</feature>
<feature type="compositionally biased region" description="Low complexity" evidence="4">
    <location>
        <begin position="274"/>
        <end position="289"/>
    </location>
</feature>
<feature type="compositionally biased region" description="Acidic residues" evidence="4">
    <location>
        <begin position="461"/>
        <end position="471"/>
    </location>
</feature>
<feature type="compositionally biased region" description="Low complexity" evidence="4">
    <location>
        <begin position="476"/>
        <end position="494"/>
    </location>
</feature>
<feature type="modified residue" description="N-acetylalanine" evidence="2">
    <location>
        <position position="2"/>
    </location>
</feature>
<feature type="modified residue" description="N6-acetyllysine" evidence="1">
    <location>
        <position position="9"/>
    </location>
</feature>
<feature type="modified residue" description="N6-acetyllysine" evidence="2">
    <location>
        <position position="21"/>
    </location>
</feature>
<feature type="modified residue" description="Phosphoserine" evidence="2">
    <location>
        <position position="32"/>
    </location>
</feature>
<feature type="modified residue" description="Phosphoserine" evidence="2">
    <location>
        <position position="33"/>
    </location>
</feature>
<feature type="modified residue" description="Phosphoserine" evidence="2">
    <location>
        <position position="40"/>
    </location>
</feature>
<feature type="modified residue" description="Phosphothreonine" evidence="2">
    <location>
        <position position="56"/>
    </location>
</feature>
<feature type="modified residue" description="Phosphoserine" evidence="2">
    <location>
        <position position="58"/>
    </location>
</feature>
<feature type="modified residue" description="Phosphoserine" evidence="1">
    <location>
        <position position="151"/>
    </location>
</feature>
<feature type="modified residue" description="Phosphoserine" evidence="2">
    <location>
        <position position="260"/>
    </location>
</feature>
<feature type="modified residue" description="Phosphoserine" evidence="2">
    <location>
        <position position="280"/>
    </location>
</feature>
<feature type="modified residue" description="Phosphoserine" evidence="2">
    <location>
        <position position="282"/>
    </location>
</feature>
<feature type="modified residue" description="Phosphoserine" evidence="2">
    <location>
        <position position="299"/>
    </location>
</feature>
<feature type="modified residue" description="Phosphoserine" evidence="2">
    <location>
        <position position="466"/>
    </location>
</feature>
<gene>
    <name type="primary">RANBP3</name>
</gene>
<proteinExistence type="evidence at transcript level"/>
<accession>Q5R4Y2</accession>
<sequence length="494" mass="52953">MADLANEEKPAIAPPVFVFQKDKGQKRSAGSSSPEGGEDSDREDGNYRPPVKRERTSSLTQFPPSQSEERSSGFRLKPPTLIRGQAPSAGLPSQKPKEQQRSVLRPAVLQAPQPKALSQTVPSSGTNGVSLPADCTGAVPAASPDTAARRSPAEAADEEKEPQKNESSNASGEEACEKKDPATQQAFVFGQNLRDRVKLINESMDEADMENAGHPSADTPTATNYFLQYISSSLENSTNSADASSNKFVFGQNMSERVLSPPKLNEVSSDANRENAAAESGSESSSQEATPEKESLAESAAAYTKATARKCLLEKVEVITGEEAESNVLQMQCKLFVFDKTSQSWVERGRGLLRLNDMASTDDGTLQSRLVMRTQGSLRLILNTKLWAQMQIDKASEKSIRITAMDTEDQVVKVFLISASSKDTGQLYAALHHRILALRSRVEQEQEAKMPAPEPGAAPSNEEDDSDDDDVLAPSGATAAGAGDEGDGQTTGST</sequence>
<dbReference type="EMBL" id="CR861107">
    <property type="protein sequence ID" value="CAH93184.1"/>
    <property type="molecule type" value="mRNA"/>
</dbReference>
<dbReference type="RefSeq" id="NP_001126873.1">
    <property type="nucleotide sequence ID" value="NM_001133401.1"/>
</dbReference>
<dbReference type="SMR" id="Q5R4Y2"/>
<dbReference type="FunCoup" id="Q5R4Y2">
    <property type="interactions" value="3937"/>
</dbReference>
<dbReference type="STRING" id="9601.ENSPPYP00000010589"/>
<dbReference type="GeneID" id="100173886"/>
<dbReference type="KEGG" id="pon:100173886"/>
<dbReference type="CTD" id="8498"/>
<dbReference type="eggNOG" id="KOG0866">
    <property type="taxonomic scope" value="Eukaryota"/>
</dbReference>
<dbReference type="InParanoid" id="Q5R4Y2"/>
<dbReference type="OrthoDB" id="185618at2759"/>
<dbReference type="Proteomes" id="UP000001595">
    <property type="component" value="Unplaced"/>
</dbReference>
<dbReference type="GO" id="GO:0005737">
    <property type="term" value="C:cytoplasm"/>
    <property type="evidence" value="ECO:0007669"/>
    <property type="project" value="UniProtKB-SubCell"/>
</dbReference>
<dbReference type="GO" id="GO:0005634">
    <property type="term" value="C:nucleus"/>
    <property type="evidence" value="ECO:0007669"/>
    <property type="project" value="UniProtKB-SubCell"/>
</dbReference>
<dbReference type="GO" id="GO:0006611">
    <property type="term" value="P:protein export from nucleus"/>
    <property type="evidence" value="ECO:0007669"/>
    <property type="project" value="TreeGrafter"/>
</dbReference>
<dbReference type="CDD" id="cd13180">
    <property type="entry name" value="RanBD_RanBP3"/>
    <property type="match status" value="1"/>
</dbReference>
<dbReference type="FunFam" id="2.30.29.30:FF:000106">
    <property type="entry name" value="ran-binding protein 3 isoform X2"/>
    <property type="match status" value="1"/>
</dbReference>
<dbReference type="Gene3D" id="2.30.29.30">
    <property type="entry name" value="Pleckstrin-homology domain (PH domain)/Phosphotyrosine-binding domain (PTB)"/>
    <property type="match status" value="1"/>
</dbReference>
<dbReference type="InterPro" id="IPR011993">
    <property type="entry name" value="PH-like_dom_sf"/>
</dbReference>
<dbReference type="InterPro" id="IPR000156">
    <property type="entry name" value="Ran_bind_dom"/>
</dbReference>
<dbReference type="InterPro" id="IPR045255">
    <property type="entry name" value="RanBP1-like"/>
</dbReference>
<dbReference type="PANTHER" id="PTHR23138">
    <property type="entry name" value="RAN BINDING PROTEIN"/>
    <property type="match status" value="1"/>
</dbReference>
<dbReference type="PANTHER" id="PTHR23138:SF91">
    <property type="entry name" value="RAN-BINDING PROTEIN 3"/>
    <property type="match status" value="1"/>
</dbReference>
<dbReference type="Pfam" id="PF00638">
    <property type="entry name" value="Ran_BP1"/>
    <property type="match status" value="1"/>
</dbReference>
<dbReference type="SMART" id="SM00160">
    <property type="entry name" value="RanBD"/>
    <property type="match status" value="1"/>
</dbReference>
<dbReference type="SUPFAM" id="SSF50729">
    <property type="entry name" value="PH domain-like"/>
    <property type="match status" value="1"/>
</dbReference>
<dbReference type="PROSITE" id="PS50196">
    <property type="entry name" value="RANBD1"/>
    <property type="match status" value="1"/>
</dbReference>
<reference key="1">
    <citation type="submission" date="2004-11" db="EMBL/GenBank/DDBJ databases">
        <authorList>
            <consortium name="The German cDNA consortium"/>
        </authorList>
    </citation>
    <scope>NUCLEOTIDE SEQUENCE [LARGE SCALE MRNA]</scope>
    <source>
        <tissue>Brain cortex</tissue>
    </source>
</reference>
<name>RANB3_PONAB</name>